<dbReference type="EC" id="1.11.1.24" evidence="16"/>
<dbReference type="EMBL" id="L14640">
    <property type="protein sequence ID" value="AAA16374.1"/>
    <property type="molecule type" value="Unassigned_DNA"/>
</dbReference>
<dbReference type="EMBL" id="Z46659">
    <property type="protein sequence ID" value="CAA86627.1"/>
    <property type="molecule type" value="Genomic_DNA"/>
</dbReference>
<dbReference type="EMBL" id="BK006946">
    <property type="protein sequence ID" value="DAA09870.1"/>
    <property type="molecule type" value="Genomic_DNA"/>
</dbReference>
<dbReference type="PIR" id="A47362">
    <property type="entry name" value="A47362"/>
</dbReference>
<dbReference type="RefSeq" id="NP_013684.1">
    <property type="nucleotide sequence ID" value="NM_001182386.1"/>
</dbReference>
<dbReference type="PDB" id="3SBC">
    <property type="method" value="X-ray"/>
    <property type="resolution" value="2.80 A"/>
    <property type="chains" value="A/B/C/D/E/F/G/H/I/J=1-196"/>
</dbReference>
<dbReference type="PDBsum" id="3SBC"/>
<dbReference type="SMR" id="P34760"/>
<dbReference type="BioGRID" id="35141">
    <property type="interactions" value="655"/>
</dbReference>
<dbReference type="DIP" id="DIP-1667N"/>
<dbReference type="FunCoup" id="P34760">
    <property type="interactions" value="1266"/>
</dbReference>
<dbReference type="IntAct" id="P34760">
    <property type="interactions" value="55"/>
</dbReference>
<dbReference type="MINT" id="P34760"/>
<dbReference type="STRING" id="4932.YML028W"/>
<dbReference type="MoonProt" id="P34760"/>
<dbReference type="PeroxiBase" id="4465">
    <property type="entry name" value="Sce2CysPrx01"/>
</dbReference>
<dbReference type="CarbonylDB" id="P34760"/>
<dbReference type="iPTMnet" id="P34760"/>
<dbReference type="PaxDb" id="4932-YML028W"/>
<dbReference type="PeptideAtlas" id="P34760"/>
<dbReference type="TopDownProteomics" id="P34760"/>
<dbReference type="EnsemblFungi" id="YML028W_mRNA">
    <property type="protein sequence ID" value="YML028W"/>
    <property type="gene ID" value="YML028W"/>
</dbReference>
<dbReference type="GeneID" id="854980"/>
<dbReference type="KEGG" id="sce:YML028W"/>
<dbReference type="AGR" id="SGD:S000004490"/>
<dbReference type="SGD" id="S000004490">
    <property type="gene designation" value="TSA1"/>
</dbReference>
<dbReference type="VEuPathDB" id="FungiDB:YML028W"/>
<dbReference type="eggNOG" id="KOG0852">
    <property type="taxonomic scope" value="Eukaryota"/>
</dbReference>
<dbReference type="GeneTree" id="ENSGT00940000153430"/>
<dbReference type="HOGENOM" id="CLU_042529_21_1_1"/>
<dbReference type="InParanoid" id="P34760"/>
<dbReference type="OMA" id="FWYPKDF"/>
<dbReference type="OrthoDB" id="185659at2759"/>
<dbReference type="BioCyc" id="YEAST:YML028W-MONOMER"/>
<dbReference type="Reactome" id="R-SCE-3299685">
    <property type="pathway name" value="Detoxification of Reactive Oxygen Species"/>
</dbReference>
<dbReference type="Reactome" id="R-SCE-5628897">
    <property type="pathway name" value="TP53 Regulates Metabolic Genes"/>
</dbReference>
<dbReference type="Reactome" id="R-SCE-6798695">
    <property type="pathway name" value="Neutrophil degranulation"/>
</dbReference>
<dbReference type="Reactome" id="R-SCE-9818027">
    <property type="pathway name" value="NFE2L2 regulating anti-oxidant/detoxification enzymes"/>
</dbReference>
<dbReference type="BioGRID-ORCS" id="854980">
    <property type="hits" value="7 hits in 10 CRISPR screens"/>
</dbReference>
<dbReference type="CD-CODE" id="67785C55">
    <property type="entry name" value="Hypersomatic shock foci"/>
</dbReference>
<dbReference type="CD-CODE" id="E03F929F">
    <property type="entry name" value="Stress granule"/>
</dbReference>
<dbReference type="EvolutionaryTrace" id="P34760"/>
<dbReference type="PRO" id="PR:P34760"/>
<dbReference type="Proteomes" id="UP000002311">
    <property type="component" value="Chromosome XIII"/>
</dbReference>
<dbReference type="RNAct" id="P34760">
    <property type="molecule type" value="protein"/>
</dbReference>
<dbReference type="GO" id="GO:0005737">
    <property type="term" value="C:cytoplasm"/>
    <property type="evidence" value="ECO:0000314"/>
    <property type="project" value="SGD"/>
</dbReference>
<dbReference type="GO" id="GO:0005829">
    <property type="term" value="C:cytosol"/>
    <property type="evidence" value="ECO:0000314"/>
    <property type="project" value="SGD"/>
</dbReference>
<dbReference type="GO" id="GO:0042802">
    <property type="term" value="F:identical protein binding"/>
    <property type="evidence" value="ECO:0000315"/>
    <property type="project" value="CAFA"/>
</dbReference>
<dbReference type="GO" id="GO:0019207">
    <property type="term" value="F:kinase regulator activity"/>
    <property type="evidence" value="ECO:0000315"/>
    <property type="project" value="SGD"/>
</dbReference>
<dbReference type="GO" id="GO:0051920">
    <property type="term" value="F:peroxiredoxin activity"/>
    <property type="evidence" value="ECO:0000314"/>
    <property type="project" value="SGD"/>
</dbReference>
<dbReference type="GO" id="GO:0043022">
    <property type="term" value="F:ribosome binding"/>
    <property type="evidence" value="ECO:0000314"/>
    <property type="project" value="SGD"/>
</dbReference>
<dbReference type="GO" id="GO:0008379">
    <property type="term" value="F:thioredoxin peroxidase activity"/>
    <property type="evidence" value="ECO:0000314"/>
    <property type="project" value="SGD"/>
</dbReference>
<dbReference type="GO" id="GO:0051082">
    <property type="term" value="F:unfolded protein binding"/>
    <property type="evidence" value="ECO:0000314"/>
    <property type="project" value="SGD"/>
</dbReference>
<dbReference type="GO" id="GO:0045454">
    <property type="term" value="P:cell redox homeostasis"/>
    <property type="evidence" value="ECO:0000314"/>
    <property type="project" value="SGD"/>
</dbReference>
<dbReference type="GO" id="GO:0072721">
    <property type="term" value="P:cellular response to dithiothreitol"/>
    <property type="evidence" value="ECO:0000315"/>
    <property type="project" value="SGD"/>
</dbReference>
<dbReference type="GO" id="GO:0034605">
    <property type="term" value="P:cellular response to heat"/>
    <property type="evidence" value="ECO:0000314"/>
    <property type="project" value="SGD"/>
</dbReference>
<dbReference type="GO" id="GO:0071447">
    <property type="term" value="P:cellular response to hydroperoxide"/>
    <property type="evidence" value="ECO:0000315"/>
    <property type="project" value="CAFA"/>
</dbReference>
<dbReference type="GO" id="GO:0034599">
    <property type="term" value="P:cellular response to oxidative stress"/>
    <property type="evidence" value="ECO:0000314"/>
    <property type="project" value="SGD"/>
</dbReference>
<dbReference type="GO" id="GO:0061077">
    <property type="term" value="P:chaperone-mediated protein folding"/>
    <property type="evidence" value="ECO:0000315"/>
    <property type="project" value="CAFA"/>
</dbReference>
<dbReference type="GO" id="GO:0000077">
    <property type="term" value="P:DNA damage checkpoint signaling"/>
    <property type="evidence" value="ECO:0000316"/>
    <property type="project" value="SGD"/>
</dbReference>
<dbReference type="GO" id="GO:0042262">
    <property type="term" value="P:DNA protection"/>
    <property type="evidence" value="ECO:0000315"/>
    <property type="project" value="SGD"/>
</dbReference>
<dbReference type="GO" id="GO:0042744">
    <property type="term" value="P:hydrogen peroxide catabolic process"/>
    <property type="evidence" value="ECO:0000318"/>
    <property type="project" value="GO_Central"/>
</dbReference>
<dbReference type="GO" id="GO:0006457">
    <property type="term" value="P:protein folding"/>
    <property type="evidence" value="ECO:0000314"/>
    <property type="project" value="SGD"/>
</dbReference>
<dbReference type="GO" id="GO:0051258">
    <property type="term" value="P:protein polymerization"/>
    <property type="evidence" value="ECO:0000315"/>
    <property type="project" value="CAFA"/>
</dbReference>
<dbReference type="GO" id="GO:0050821">
    <property type="term" value="P:protein stabilization"/>
    <property type="evidence" value="ECO:0000315"/>
    <property type="project" value="CAFA"/>
</dbReference>
<dbReference type="GO" id="GO:0006111">
    <property type="term" value="P:regulation of gluconeogenesis"/>
    <property type="evidence" value="ECO:0000315"/>
    <property type="project" value="SGD"/>
</dbReference>
<dbReference type="GO" id="GO:0033194">
    <property type="term" value="P:response to hydroperoxide"/>
    <property type="evidence" value="ECO:0000315"/>
    <property type="project" value="SGD"/>
</dbReference>
<dbReference type="GO" id="GO:0006979">
    <property type="term" value="P:response to oxidative stress"/>
    <property type="evidence" value="ECO:0000318"/>
    <property type="project" value="GO_Central"/>
</dbReference>
<dbReference type="CDD" id="cd03015">
    <property type="entry name" value="PRX_Typ2cys"/>
    <property type="match status" value="1"/>
</dbReference>
<dbReference type="FunFam" id="3.40.30.10:FF:000003">
    <property type="entry name" value="Peroxiredoxin 1"/>
    <property type="match status" value="1"/>
</dbReference>
<dbReference type="Gene3D" id="3.40.30.10">
    <property type="entry name" value="Glutaredoxin"/>
    <property type="match status" value="1"/>
</dbReference>
<dbReference type="InterPro" id="IPR000866">
    <property type="entry name" value="AhpC/TSA"/>
</dbReference>
<dbReference type="InterPro" id="IPR050217">
    <property type="entry name" value="Peroxiredoxin"/>
</dbReference>
<dbReference type="InterPro" id="IPR024706">
    <property type="entry name" value="Peroxiredoxin_AhpC-typ"/>
</dbReference>
<dbReference type="InterPro" id="IPR019479">
    <property type="entry name" value="Peroxiredoxin_C"/>
</dbReference>
<dbReference type="InterPro" id="IPR036249">
    <property type="entry name" value="Thioredoxin-like_sf"/>
</dbReference>
<dbReference type="InterPro" id="IPR013766">
    <property type="entry name" value="Thioredoxin_domain"/>
</dbReference>
<dbReference type="PANTHER" id="PTHR10681:SF171">
    <property type="entry name" value="PEROXIREDOXIN 4"/>
    <property type="match status" value="1"/>
</dbReference>
<dbReference type="PANTHER" id="PTHR10681">
    <property type="entry name" value="THIOREDOXIN PEROXIDASE"/>
    <property type="match status" value="1"/>
</dbReference>
<dbReference type="Pfam" id="PF10417">
    <property type="entry name" value="1-cysPrx_C"/>
    <property type="match status" value="1"/>
</dbReference>
<dbReference type="Pfam" id="PF00578">
    <property type="entry name" value="AhpC-TSA"/>
    <property type="match status" value="1"/>
</dbReference>
<dbReference type="PIRSF" id="PIRSF000239">
    <property type="entry name" value="AHPC"/>
    <property type="match status" value="1"/>
</dbReference>
<dbReference type="SUPFAM" id="SSF52833">
    <property type="entry name" value="Thioredoxin-like"/>
    <property type="match status" value="1"/>
</dbReference>
<dbReference type="PROSITE" id="PS51352">
    <property type="entry name" value="THIOREDOXIN_2"/>
    <property type="match status" value="1"/>
</dbReference>
<sequence length="196" mass="21590">MVAQVQKQAPTFKKTAVVDGVFDEVSLDKYKGKYVVLAFIPLAFTFVCPTEIIAFSEAAKKFEEQGAQVLFASTDSEYSLLAWTNIPRKEGGLGPINIPLLADTNHSLSRDYGVLIEEEGVALRGLFIIDPKGVIRHITINDLPVGRNVDEALRLVEAFQWTDKNGTVLPCNWTPGAATIKPTVEDSKEYFEAANK</sequence>
<name>TSA1_YEAST</name>
<comment type="function">
    <text evidence="2 5 6 7 9 11 12 13">Thiol-specific peroxidase that catalyzes the reduction of hydrogen peroxide and organic hydroperoxides to water and alcohols, respectively. Plays a role in cell protection against oxidative stress by detoxifying peroxides and as sensor of hydrogen peroxide-mediated signaling events (PubMed:10681558, PubMed:15210711, PubMed:19106090, PubMed:2895105, PubMed:7961686). Protects the cell against the oxidative stress caused by nascent-protein misfolding and aggregation (PubMed:24424024). Relays hydrogen peroxide as a signal to the transcription factor YAP1 by inducing the formation of intramolecular disulfide bonds in YAP1, which causes its nuclear accumulation and activation (PubMed:15706081, PubMed:19106090). Can act alternatively as peroxidase and molecular chaperone. Oxidative stress and heat shock exposure cause a reversible shift of the protein structure from low MW species to high MW complexes, triggering a peroxidase-to-chaperone functional switch. The chaperone function of the protein enhances resistance to heat shock (PubMed:15163410).</text>
</comment>
<comment type="catalytic activity">
    <reaction evidence="16">
        <text>a hydroperoxide + [thioredoxin]-dithiol = an alcohol + [thioredoxin]-disulfide + H2O</text>
        <dbReference type="Rhea" id="RHEA:62620"/>
        <dbReference type="Rhea" id="RHEA-COMP:10698"/>
        <dbReference type="Rhea" id="RHEA-COMP:10700"/>
        <dbReference type="ChEBI" id="CHEBI:15377"/>
        <dbReference type="ChEBI" id="CHEBI:29950"/>
        <dbReference type="ChEBI" id="CHEBI:30879"/>
        <dbReference type="ChEBI" id="CHEBI:35924"/>
        <dbReference type="ChEBI" id="CHEBI:50058"/>
        <dbReference type="EC" id="1.11.1.24"/>
    </reaction>
</comment>
<comment type="biophysicochemical properties">
    <kinetics>
        <KM evidence="16">3 uM for H(2)O(2)</KM>
        <KM evidence="16">4 uM for cumene hydroperoxide</KM>
        <KM evidence="16">10 uM for tert-butyl hydroperoxide</KM>
        <KM evidence="16">2 uM for TRX1</KM>
        <KM evidence="16">3 uM for TRX2</KM>
        <KM evidence="6">12 uM for H(2)O(2)</KM>
        <KM evidence="6">17.1 uM for cumene hydroperoxide</KM>
        <KM evidence="6">7.9 uM for tert-butyl hydroperoxide</KM>
        <Vmax evidence="16">4.8 umol/min/mg enzyme for H(2)O(2)</Vmax>
        <Vmax evidence="16">2.2 umol/min/mg enzyme for cumene hydroperoxide</Vmax>
        <Vmax evidence="16">2.4 umol/min/mg enzyme for tert-butyl hydroperoxide</Vmax>
        <Vmax evidence="16">5.5 umol/min/mg enzyme for TRX1</Vmax>
        <Vmax evidence="16">5.5 umol/min/mg enzyme for TRX2</Vmax>
        <Vmax evidence="6">0.66 uM/sec/mg enzyme for H(2)O(2)</Vmax>
        <Vmax evidence="6">0.56 uM/sec/mg enzyme for cumene hydroperoxide</Vmax>
        <Vmax evidence="6">0.61 uM/sec/mg enzyme for tert-butyl hydroperoxide</Vmax>
    </kinetics>
</comment>
<comment type="subunit">
    <text evidence="9 14">Homodimer; disulfide-linked, upon oxidation (PubMed:8041739). Interacts with YAP1 via transient disulfide linkages (PubMed:19106090).</text>
</comment>
<comment type="interaction">
    <interactant intactId="EBI-19623">
        <id>P34760</id>
    </interactant>
    <interactant intactId="EBI-19631">
        <id>Q04120</id>
        <label>TSA2</label>
    </interactant>
    <organismsDiffer>false</organismsDiffer>
    <experiments>4</experiments>
</comment>
<comment type="subcellular location">
    <subcellularLocation>
        <location evidence="2 8 11 15">Cytoplasm</location>
    </subcellularLocation>
    <text evidence="8 11">Associates with ribosomes (PubMed:18271751). Colocalizes with sites of protein aggregation adjacent to active mitochondria (PubMed:24424024).</text>
</comment>
<comment type="PTM">
    <text evidence="4">The enzyme can be inactivated by further oxidation of the cysteine sulfenic acid (C(P)-SOH) to sulphinic acid (C(P)-SO2H) instead of its condensation to a disulfide bond. It can be reactivated by forming a transient disulfide bond with sulfiredoxin SRX1, which reduces the cysteine sulfinic acid in an ATP- and Mg-dependent manner.</text>
</comment>
<comment type="miscellaneous">
    <text evidence="24">The active site is a conserved redox-active cysteine residue, the peroxidatic cysteine (C(P)), which makes the nucleophilic attack on the peroxide substrate. The peroxide oxidizes the C(P)-SH to cysteine sulfenic acid (C(P)-SOH), which then reacts with another cysteine residue, the resolving cysteine (C(R)), to form a disulfide bridge. The disulfide is subsequently reduced by an appropriate electron donor to complete the catalytic cycle. In this typical 2-Cys peroxiredoxin, C(R) is provided by the other dimeric subunit to form an intersubunit disulfide. The disulfide is subsequently reduced by thioredoxin.</text>
</comment>
<comment type="miscellaneous">
    <text evidence="3">Present with 378000 molecules/cell in log phase SD medium.</text>
</comment>
<comment type="similarity">
    <text evidence="22">Belongs to the peroxiredoxin family. AhpC/Prx1 subfamily.</text>
</comment>
<accession>P34760</accession>
<accession>D6VZE6</accession>
<protein>
    <recommendedName>
        <fullName evidence="22">Peroxiredoxin TSA1</fullName>
        <shortName>Prx</shortName>
        <ecNumber evidence="16">1.11.1.24</ecNumber>
    </recommendedName>
    <alternativeName>
        <fullName evidence="17">Cytoplasmic thiol peroxidase 1</fullName>
        <shortName evidence="17">cTPx 1</shortName>
    </alternativeName>
    <alternativeName>
        <fullName evidence="18">Protector protein</fullName>
        <shortName>PRP</shortName>
    </alternativeName>
    <alternativeName>
        <fullName evidence="20">Thiol-specific antioxidant protein 1</fullName>
    </alternativeName>
    <alternativeName>
        <fullName evidence="21">Thioredoxin peroxidase type Ia</fullName>
        <shortName>TPx type Ia</shortName>
    </alternativeName>
    <alternativeName>
        <fullName evidence="19">Thioredoxin-dependent peroxide reductase</fullName>
    </alternativeName>
    <alternativeName>
        <fullName evidence="22">Thioredoxin-dependent peroxiredoxin TSA1</fullName>
    </alternativeName>
</protein>
<keyword id="KW-0002">3D-structure</keyword>
<keyword id="KW-0049">Antioxidant</keyword>
<keyword id="KW-0963">Cytoplasm</keyword>
<keyword id="KW-0903">Direct protein sequencing</keyword>
<keyword id="KW-1015">Disulfide bond</keyword>
<keyword id="KW-1017">Isopeptide bond</keyword>
<keyword id="KW-0560">Oxidoreductase</keyword>
<keyword id="KW-0575">Peroxidase</keyword>
<keyword id="KW-0597">Phosphoprotein</keyword>
<keyword id="KW-0676">Redox-active center</keyword>
<keyword id="KW-1185">Reference proteome</keyword>
<keyword id="KW-0832">Ubl conjugation</keyword>
<gene>
    <name evidence="20" type="primary">TSA1</name>
    <name type="synonym">TPX1</name>
    <name type="synonym">TSA</name>
    <name type="synonym">ZRG14</name>
    <name evidence="25" type="ordered locus">YML028W</name>
</gene>
<proteinExistence type="evidence at protein level"/>
<organism>
    <name type="scientific">Saccharomyces cerevisiae (strain ATCC 204508 / S288c)</name>
    <name type="common">Baker's yeast</name>
    <dbReference type="NCBI Taxonomy" id="559292"/>
    <lineage>
        <taxon>Eukaryota</taxon>
        <taxon>Fungi</taxon>
        <taxon>Dikarya</taxon>
        <taxon>Ascomycota</taxon>
        <taxon>Saccharomycotina</taxon>
        <taxon>Saccharomycetes</taxon>
        <taxon>Saccharomycetales</taxon>
        <taxon>Saccharomycetaceae</taxon>
        <taxon>Saccharomyces</taxon>
    </lineage>
</organism>
<feature type="initiator methionine" description="Removed" evidence="15">
    <location>
        <position position="1"/>
    </location>
</feature>
<feature type="chain" id="PRO_0000135095" description="Peroxiredoxin TSA1">
    <location>
        <begin position="2"/>
        <end position="196"/>
    </location>
</feature>
<feature type="domain" description="Thioredoxin" evidence="1">
    <location>
        <begin position="3"/>
        <end position="161"/>
    </location>
</feature>
<feature type="active site" description="Cysteine sulfenic acid (-SOH) intermediate" evidence="24">
    <location>
        <position position="48"/>
    </location>
</feature>
<feature type="binding site" evidence="10 26">
    <location>
        <begin position="45"/>
        <end position="47"/>
    </location>
    <ligand>
        <name>substrate</name>
    </ligand>
</feature>
<feature type="binding site" evidence="10 26">
    <location>
        <position position="124"/>
    </location>
    <ligand>
        <name>substrate</name>
    </ligand>
</feature>
<feature type="site" description="Important for catalytic activity, helps activating the peroxidatic cysteine through H-bonding">
    <location>
        <position position="45"/>
    </location>
</feature>
<feature type="modified residue" description="Phosphothreonine" evidence="27 28">
    <location>
        <position position="174"/>
    </location>
</feature>
<feature type="disulfide bond" description="Interchain (with C-171); in linked form" evidence="23">
    <location>
        <position position="48"/>
    </location>
</feature>
<feature type="disulfide bond" description="Interchain (with C-84 in SRX1); transient" evidence="4">
    <location>
        <position position="48"/>
    </location>
</feature>
<feature type="disulfide bond" description="Interchain (with C-48); in linked form" evidence="23">
    <location>
        <position position="171"/>
    </location>
</feature>
<feature type="cross-link" description="Glycyl lysine isopeptide (Lys-Gly) (interchain with G-Cter in ubiquitin)" evidence="29">
    <location>
        <position position="14"/>
    </location>
</feature>
<feature type="cross-link" description="Glycyl lysine isopeptide (Lys-Gly) (interchain with G-Cter in ubiquitin)" evidence="29">
    <location>
        <position position="89"/>
    </location>
</feature>
<feature type="cross-link" description="Glycyl lysine isopeptide (Lys-Gly) (interchain with G-Cter in ubiquitin)" evidence="29">
    <location>
        <position position="132"/>
    </location>
</feature>
<feature type="mutagenesis site" description="Exists mainly as monomer. Has no peroxiredoxin activity. Fails to protect glutamine synthetase against damage by DTT oxidation." evidence="13 14">
    <original>C</original>
    <variation>S</variation>
    <location>
        <position position="48"/>
    </location>
</feature>
<feature type="mutagenesis site" description="Exists mainly as monomer. Has no peroxiredoxin activity." evidence="13 14">
    <original>C</original>
    <variation>S</variation>
    <location>
        <position position="171"/>
    </location>
</feature>
<feature type="strand" evidence="30">
    <location>
        <begin position="14"/>
        <end position="18"/>
    </location>
</feature>
<feature type="strand" evidence="30">
    <location>
        <begin position="21"/>
        <end position="25"/>
    </location>
</feature>
<feature type="helix" evidence="30">
    <location>
        <begin position="27"/>
        <end position="30"/>
    </location>
</feature>
<feature type="strand" evidence="30">
    <location>
        <begin position="33"/>
        <end position="39"/>
    </location>
</feature>
<feature type="helix" evidence="30">
    <location>
        <begin position="47"/>
        <end position="64"/>
    </location>
</feature>
<feature type="strand" evidence="30">
    <location>
        <begin position="67"/>
        <end position="75"/>
    </location>
</feature>
<feature type="helix" evidence="30">
    <location>
        <begin position="77"/>
        <end position="84"/>
    </location>
</feature>
<feature type="helix" evidence="30">
    <location>
        <begin position="88"/>
        <end position="90"/>
    </location>
</feature>
<feature type="strand" evidence="30">
    <location>
        <begin position="100"/>
        <end position="102"/>
    </location>
</feature>
<feature type="helix" evidence="30">
    <location>
        <begin position="107"/>
        <end position="112"/>
    </location>
</feature>
<feature type="turn" evidence="30">
    <location>
        <begin position="117"/>
        <end position="119"/>
    </location>
</feature>
<feature type="strand" evidence="30">
    <location>
        <begin position="124"/>
        <end position="129"/>
    </location>
</feature>
<feature type="strand" evidence="30">
    <location>
        <begin position="133"/>
        <end position="141"/>
    </location>
</feature>
<feature type="helix" evidence="30">
    <location>
        <begin position="149"/>
        <end position="165"/>
    </location>
</feature>
<feature type="turn" evidence="30">
    <location>
        <begin position="184"/>
        <end position="186"/>
    </location>
</feature>
<feature type="helix" evidence="30">
    <location>
        <begin position="187"/>
        <end position="194"/>
    </location>
</feature>
<evidence type="ECO:0000255" key="1">
    <source>
        <dbReference type="PROSITE-ProRule" id="PRU00691"/>
    </source>
</evidence>
<evidence type="ECO:0000269" key="2">
    <source>
    </source>
</evidence>
<evidence type="ECO:0000269" key="3">
    <source>
    </source>
</evidence>
<evidence type="ECO:0000269" key="4">
    <source>
    </source>
</evidence>
<evidence type="ECO:0000269" key="5">
    <source>
    </source>
</evidence>
<evidence type="ECO:0000269" key="6">
    <source>
    </source>
</evidence>
<evidence type="ECO:0000269" key="7">
    <source>
    </source>
</evidence>
<evidence type="ECO:0000269" key="8">
    <source>
    </source>
</evidence>
<evidence type="ECO:0000269" key="9">
    <source>
    </source>
</evidence>
<evidence type="ECO:0000269" key="10">
    <source>
    </source>
</evidence>
<evidence type="ECO:0000269" key="11">
    <source>
    </source>
</evidence>
<evidence type="ECO:0000269" key="12">
    <source>
    </source>
</evidence>
<evidence type="ECO:0000269" key="13">
    <source>
    </source>
</evidence>
<evidence type="ECO:0000269" key="14">
    <source>
    </source>
</evidence>
<evidence type="ECO:0000269" key="15">
    <source>
    </source>
</evidence>
<evidence type="ECO:0000269" key="16">
    <source>
    </source>
</evidence>
<evidence type="ECO:0000303" key="17">
    <source>
    </source>
</evidence>
<evidence type="ECO:0000303" key="18">
    <source>
    </source>
</evidence>
<evidence type="ECO:0000303" key="19">
    <source>
    </source>
</evidence>
<evidence type="ECO:0000303" key="20">
    <source>
    </source>
</evidence>
<evidence type="ECO:0000303" key="21">
    <source>
    </source>
</evidence>
<evidence type="ECO:0000305" key="22"/>
<evidence type="ECO:0000305" key="23">
    <source>
    </source>
</evidence>
<evidence type="ECO:0000305" key="24">
    <source>
    </source>
</evidence>
<evidence type="ECO:0000312" key="25">
    <source>
        <dbReference type="SGD" id="S000004490"/>
    </source>
</evidence>
<evidence type="ECO:0007744" key="26">
    <source>
        <dbReference type="PDB" id="3SBC"/>
    </source>
</evidence>
<evidence type="ECO:0007744" key="27">
    <source>
    </source>
</evidence>
<evidence type="ECO:0007744" key="28">
    <source>
    </source>
</evidence>
<evidence type="ECO:0007744" key="29">
    <source>
    </source>
</evidence>
<evidence type="ECO:0007829" key="30">
    <source>
        <dbReference type="PDB" id="3SBC"/>
    </source>
</evidence>
<reference key="1">
    <citation type="journal article" date="1993" name="J. Biol. Chem.">
        <title>Cloning, sequencing, and mutation of thiol-specific antioxidant gene of Saccharomyces cerevisiae.</title>
        <authorList>
            <person name="Chae H.Z."/>
            <person name="Kim I.-H."/>
            <person name="Kim K."/>
            <person name="Rhee S.G."/>
        </authorList>
    </citation>
    <scope>NUCLEOTIDE SEQUENCE</scope>
    <scope>PARTIAL PROTEIN SEQUENCE OF 2-13; 62-66; 79-87; 90-94; 137-143; 148-153; 155-161 AND 192-196</scope>
    <scope>CLEAVAGE OF INITIATOR METHIONINE</scope>
    <scope>SUBCELLULAR LOCATION</scope>
    <source>
        <strain>JD7-7C</strain>
    </source>
</reference>
<reference key="2">
    <citation type="journal article" date="1997" name="Nature">
        <title>The nucleotide sequence of Saccharomyces cerevisiae chromosome XIII.</title>
        <authorList>
            <person name="Bowman S."/>
            <person name="Churcher C.M."/>
            <person name="Badcock K."/>
            <person name="Brown D."/>
            <person name="Chillingworth T."/>
            <person name="Connor R."/>
            <person name="Dedman K."/>
            <person name="Devlin K."/>
            <person name="Gentles S."/>
            <person name="Hamlin N."/>
            <person name="Hunt S."/>
            <person name="Jagels K."/>
            <person name="Lye G."/>
            <person name="Moule S."/>
            <person name="Odell C."/>
            <person name="Pearson D."/>
            <person name="Rajandream M.A."/>
            <person name="Rice P."/>
            <person name="Skelton J."/>
            <person name="Walsh S.V."/>
            <person name="Whitehead S."/>
            <person name="Barrell B.G."/>
        </authorList>
    </citation>
    <scope>NUCLEOTIDE SEQUENCE [LARGE SCALE GENOMIC DNA]</scope>
    <source>
        <strain>ATCC 204508 / S288c</strain>
    </source>
</reference>
<reference key="3">
    <citation type="journal article" date="2014" name="G3 (Bethesda)">
        <title>The reference genome sequence of Saccharomyces cerevisiae: Then and now.</title>
        <authorList>
            <person name="Engel S.R."/>
            <person name="Dietrich F.S."/>
            <person name="Fisk D.G."/>
            <person name="Binkley G."/>
            <person name="Balakrishnan R."/>
            <person name="Costanzo M.C."/>
            <person name="Dwight S.S."/>
            <person name="Hitz B.C."/>
            <person name="Karra K."/>
            <person name="Nash R.S."/>
            <person name="Weng S."/>
            <person name="Wong E.D."/>
            <person name="Lloyd P."/>
            <person name="Skrzypek M.S."/>
            <person name="Miyasato S.R."/>
            <person name="Simison M."/>
            <person name="Cherry J.M."/>
        </authorList>
    </citation>
    <scope>GENOME REANNOTATION</scope>
    <source>
        <strain>ATCC 204508 / S288c</strain>
    </source>
</reference>
<reference key="4">
    <citation type="journal article" date="1994" name="Proc. Natl. Acad. Sci. U.S.A.">
        <title>Dimerization of thiol-specific antioxidant and the essential role of cysteine 47.</title>
        <authorList>
            <person name="Chae H.Z."/>
            <person name="Uhm T.B."/>
            <person name="Rhee S.G."/>
        </authorList>
    </citation>
    <scope>PROTEIN SEQUENCE OF 15-19; 32-38; 155-159 AND 165-169</scope>
    <scope>SUBUNIT</scope>
    <scope>ACTIVE SITE</scope>
    <scope>DISULFIDE BOND</scope>
    <scope>MUTAGENESIS OF CYS-48 AND CYS-171</scope>
</reference>
<reference key="5">
    <citation type="journal article" date="1988" name="J. Biol. Chem.">
        <title>The isolation and purification of a specific 'protector' protein which inhibits enzyme inactivation by a thiol/Fe(III)/O2 mixed-function oxidation system.</title>
        <authorList>
            <person name="Kim K."/>
            <person name="Kim I.H."/>
            <person name="Lee K.Y."/>
            <person name="Rhee S.G."/>
            <person name="Stadtman E.R."/>
        </authorList>
    </citation>
    <scope>FUNCTION</scope>
</reference>
<reference key="6">
    <citation type="journal article" date="1994" name="J. Biol. Chem.">
        <title>Thioredoxin-dependent peroxide reductase from yeast.</title>
        <authorList>
            <person name="Chae H.Z."/>
            <person name="Chung S.J."/>
            <person name="Rhee S.G."/>
        </authorList>
    </citation>
    <scope>FUNCTION</scope>
    <scope>MUTAGENESIS OF CYS-48 AND CYS-171</scope>
</reference>
<reference key="7">
    <citation type="journal article" date="1999" name="Biochemistry">
        <title>Purification and characterization of a second type thioredoxin peroxidase (type II TPx) from Saccharomyces cerevisiae.</title>
        <authorList>
            <person name="Jeong J.S."/>
            <person name="Kwon S.J."/>
            <person name="Kang S.W."/>
            <person name="Rhee S.G."/>
            <person name="Kim K."/>
        </authorList>
    </citation>
    <scope>FUNCTION</scope>
    <scope>CATALYTIC ACTIVITY</scope>
    <scope>BIOPHYSICOCHEMICAL PROPERTIES</scope>
</reference>
<reference key="8">
    <citation type="journal article" date="2000" name="J. Biol. Chem.">
        <title>Distinct physiological functions of thiol peroxidase isoenzymes in Saccharomyces cerevisiae.</title>
        <authorList>
            <person name="Park S.G."/>
            <person name="Cha M.-K."/>
            <person name="Jeong W."/>
            <person name="Kim I.-H."/>
        </authorList>
    </citation>
    <scope>FUNCTION</scope>
    <scope>SUBCELLULAR LOCATION</scope>
</reference>
<reference key="9">
    <citation type="journal article" date="2003" name="Nature">
        <title>Global analysis of protein expression in yeast.</title>
        <authorList>
            <person name="Ghaemmaghami S."/>
            <person name="Huh W.-K."/>
            <person name="Bower K."/>
            <person name="Howson R.W."/>
            <person name="Belle A."/>
            <person name="Dephoure N."/>
            <person name="O'Shea E.K."/>
            <person name="Weissman J.S."/>
        </authorList>
    </citation>
    <scope>LEVEL OF PROTEIN EXPRESSION [LARGE SCALE ANALYSIS]</scope>
</reference>
<reference key="10">
    <citation type="journal article" date="2003" name="Nature">
        <title>ATP-dependent reduction of cysteine-sulphinic acid by S. cerevisiae sulphiredoxin.</title>
        <authorList>
            <person name="Biteau B."/>
            <person name="Labarre J."/>
            <person name="Toledano M.B."/>
        </authorList>
    </citation>
    <scope>DISULFIDE BOND WITH SRX1</scope>
</reference>
<reference key="11">
    <citation type="journal article" date="2004" name="Cell">
        <title>Two enzymes in one; two yeast peroxiredoxins display oxidative stress-dependent switching from a peroxidase to a molecular chaperone function.</title>
        <authorList>
            <person name="Jang H.H."/>
            <person name="Lee K.O."/>
            <person name="Chi Y.H."/>
            <person name="Jung B.G."/>
            <person name="Park S.K."/>
            <person name="Park J.H."/>
            <person name="Lee J.R."/>
            <person name="Lee S.S."/>
            <person name="Moon J.C."/>
            <person name="Yun J.W."/>
            <person name="Choi Y.O."/>
            <person name="Kim W.Y."/>
            <person name="Kang J.S."/>
            <person name="Cheong G.W."/>
            <person name="Yun D.J."/>
            <person name="Rhee S.G."/>
            <person name="Cho M.J."/>
            <person name="Lee S.Y."/>
        </authorList>
    </citation>
    <scope>FUNCTION</scope>
</reference>
<reference key="12">
    <citation type="journal article" date="2004" name="J. Biol. Chem.">
        <title>Cytosolic thioredoxin peroxidase I and II are important defenses of yeast against organic hydroperoxide insult: catalases and peroxiredoxins cooperate in the decomposition of H2O2 by yeast.</title>
        <authorList>
            <person name="Munhoz D.C."/>
            <person name="Netto L.E."/>
        </authorList>
    </citation>
    <scope>FUNCTION</scope>
    <scope>BIOPHYSICOCHEMICAL PROPERTIES</scope>
</reference>
<reference key="13">
    <citation type="journal article" date="2005" name="Antioxid. Redox Signal.">
        <title>Peroxiredoxin-mediated redox regulation of the nuclear localization of Yap1, a transcription factor in budding yeast.</title>
        <authorList>
            <person name="Okazaki S."/>
            <person name="Naganuma A."/>
            <person name="Kuge S."/>
        </authorList>
    </citation>
    <scope>FUNCTION</scope>
</reference>
<reference key="14">
    <citation type="journal article" date="2008" name="Biochem. J.">
        <title>The yeast Tsa1 peroxiredoxin is a ribosome-associated antioxidant.</title>
        <authorList>
            <person name="Trotter E.W."/>
            <person name="Rand J.D."/>
            <person name="Vickerstaff J."/>
            <person name="Grant C.M."/>
        </authorList>
    </citation>
    <scope>FUNCTION</scope>
    <scope>SUBCELLULAR LOCATION</scope>
</reference>
<reference key="15">
    <citation type="journal article" date="2008" name="Mol. Cell. Proteomics">
        <title>A multidimensional chromatography technology for in-depth phosphoproteome analysis.</title>
        <authorList>
            <person name="Albuquerque C.P."/>
            <person name="Smolka M.B."/>
            <person name="Payne S.H."/>
            <person name="Bafna V."/>
            <person name="Eng J."/>
            <person name="Zhou H."/>
        </authorList>
    </citation>
    <scope>PHOSPHORYLATION [LARGE SCALE ANALYSIS] AT THR-174</scope>
    <scope>IDENTIFICATION BY MASS SPECTROMETRY [LARGE SCALE ANALYSIS]</scope>
</reference>
<reference key="16">
    <citation type="journal article" date="2009" name="J. Biol. Chem.">
        <title>A major peroxiredoxin-induced activation of Yap1 transcription factor is mediated by reduction-sensitive disulfide bonds and reveals a low level of transcriptional activation.</title>
        <authorList>
            <person name="Tachibana T."/>
            <person name="Okazaki S."/>
            <person name="Murayama A."/>
            <person name="Naganuma A."/>
            <person name="Nomoto A."/>
            <person name="Kuge S."/>
        </authorList>
    </citation>
    <scope>FUNCTION</scope>
    <scope>INTERACTION WITH YAP1</scope>
</reference>
<reference key="17">
    <citation type="journal article" date="2009" name="Science">
        <title>Global analysis of Cdk1 substrate phosphorylation sites provides insights into evolution.</title>
        <authorList>
            <person name="Holt L.J."/>
            <person name="Tuch B.B."/>
            <person name="Villen J."/>
            <person name="Johnson A.D."/>
            <person name="Gygi S.P."/>
            <person name="Morgan D.O."/>
        </authorList>
    </citation>
    <scope>PHOSPHORYLATION [LARGE SCALE ANALYSIS] AT THR-174</scope>
    <scope>IDENTIFICATION BY MASS SPECTROMETRY [LARGE SCALE ANALYSIS]</scope>
</reference>
<reference key="18">
    <citation type="journal article" date="2012" name="Proteomics">
        <title>Sites of ubiquitin attachment in Saccharomyces cerevisiae.</title>
        <authorList>
            <person name="Starita L.M."/>
            <person name="Lo R.S."/>
            <person name="Eng J.K."/>
            <person name="von Haller P.D."/>
            <person name="Fields S."/>
        </authorList>
    </citation>
    <scope>UBIQUITINATION [LARGE SCALE ANALYSIS] AT LYS-14; LYS-89 AND LYS-132</scope>
    <scope>IDENTIFICATION BY MASS SPECTROMETRY [LARGE SCALE ANALYSIS]</scope>
</reference>
<reference key="19">
    <citation type="journal article" date="2014" name="J. Cell Sci.">
        <title>The yeast peroxiredoxin Tsa1 protects against protein-aggregate-induced oxidative stress.</title>
        <authorList>
            <person name="Weids A.J."/>
            <person name="Grant C.M."/>
        </authorList>
    </citation>
    <scope>FUNCTION</scope>
    <scope>SUBCELLULAR LOCATION</scope>
</reference>
<reference key="20">
    <citation type="journal article" date="2012" name="J. Mol. Biol.">
        <title>Disulfide biochemistry in 2-cys peroxiredoxin: requirement of Glu50 and Arg146 for the reduction of yeast Tsa1 by thioredoxin.</title>
        <authorList>
            <person name="Tairum C.A. Jr."/>
            <person name="de Oliveira M.A."/>
            <person name="Horta B.B."/>
            <person name="Zara F.J."/>
            <person name="Netto L.E."/>
        </authorList>
    </citation>
    <scope>X-RAY CRYSTALLOGRAPHY (2.80 ANGSTROMS) OF MUTANT SER-48 IN COMPLEX WITH DITHIOTHREITOL</scope>
</reference>